<gene>
    <name evidence="1" type="primary">prs</name>
    <name type="synonym">prsA</name>
    <name type="ordered locus">TTE2571</name>
</gene>
<name>KPRS_CALS4</name>
<dbReference type="EC" id="2.7.6.1" evidence="1"/>
<dbReference type="EMBL" id="AE008691">
    <property type="protein sequence ID" value="AAM25695.1"/>
    <property type="molecule type" value="Genomic_DNA"/>
</dbReference>
<dbReference type="RefSeq" id="WP_011026572.1">
    <property type="nucleotide sequence ID" value="NZ_JANUCV010000001.1"/>
</dbReference>
<dbReference type="SMR" id="Q8R753"/>
<dbReference type="STRING" id="273068.TTE2571"/>
<dbReference type="KEGG" id="tte:TTE2571"/>
<dbReference type="eggNOG" id="COG0462">
    <property type="taxonomic scope" value="Bacteria"/>
</dbReference>
<dbReference type="HOGENOM" id="CLU_033546_4_0_9"/>
<dbReference type="OrthoDB" id="9777067at2"/>
<dbReference type="UniPathway" id="UPA00087">
    <property type="reaction ID" value="UER00172"/>
</dbReference>
<dbReference type="Proteomes" id="UP000000555">
    <property type="component" value="Chromosome"/>
</dbReference>
<dbReference type="GO" id="GO:0005737">
    <property type="term" value="C:cytoplasm"/>
    <property type="evidence" value="ECO:0007669"/>
    <property type="project" value="UniProtKB-SubCell"/>
</dbReference>
<dbReference type="GO" id="GO:0002189">
    <property type="term" value="C:ribose phosphate diphosphokinase complex"/>
    <property type="evidence" value="ECO:0007669"/>
    <property type="project" value="TreeGrafter"/>
</dbReference>
<dbReference type="GO" id="GO:0005524">
    <property type="term" value="F:ATP binding"/>
    <property type="evidence" value="ECO:0007669"/>
    <property type="project" value="UniProtKB-KW"/>
</dbReference>
<dbReference type="GO" id="GO:0016301">
    <property type="term" value="F:kinase activity"/>
    <property type="evidence" value="ECO:0007669"/>
    <property type="project" value="UniProtKB-KW"/>
</dbReference>
<dbReference type="GO" id="GO:0000287">
    <property type="term" value="F:magnesium ion binding"/>
    <property type="evidence" value="ECO:0007669"/>
    <property type="project" value="UniProtKB-UniRule"/>
</dbReference>
<dbReference type="GO" id="GO:0004749">
    <property type="term" value="F:ribose phosphate diphosphokinase activity"/>
    <property type="evidence" value="ECO:0007669"/>
    <property type="project" value="UniProtKB-UniRule"/>
</dbReference>
<dbReference type="GO" id="GO:0006015">
    <property type="term" value="P:5-phosphoribose 1-diphosphate biosynthetic process"/>
    <property type="evidence" value="ECO:0007669"/>
    <property type="project" value="UniProtKB-UniRule"/>
</dbReference>
<dbReference type="GO" id="GO:0006164">
    <property type="term" value="P:purine nucleotide biosynthetic process"/>
    <property type="evidence" value="ECO:0007669"/>
    <property type="project" value="TreeGrafter"/>
</dbReference>
<dbReference type="GO" id="GO:0009156">
    <property type="term" value="P:ribonucleoside monophosphate biosynthetic process"/>
    <property type="evidence" value="ECO:0007669"/>
    <property type="project" value="InterPro"/>
</dbReference>
<dbReference type="CDD" id="cd06223">
    <property type="entry name" value="PRTases_typeI"/>
    <property type="match status" value="1"/>
</dbReference>
<dbReference type="FunFam" id="3.40.50.2020:FF:000001">
    <property type="entry name" value="Ribose-phosphate pyrophosphokinase"/>
    <property type="match status" value="1"/>
</dbReference>
<dbReference type="FunFam" id="3.40.50.2020:FF:000002">
    <property type="entry name" value="Ribose-phosphate pyrophosphokinase"/>
    <property type="match status" value="1"/>
</dbReference>
<dbReference type="Gene3D" id="3.40.50.2020">
    <property type="match status" value="2"/>
</dbReference>
<dbReference type="HAMAP" id="MF_00583_B">
    <property type="entry name" value="RibP_PPkinase_B"/>
    <property type="match status" value="1"/>
</dbReference>
<dbReference type="InterPro" id="IPR000842">
    <property type="entry name" value="PRib_PP_synth_CS"/>
</dbReference>
<dbReference type="InterPro" id="IPR029099">
    <property type="entry name" value="Pribosyltran_N"/>
</dbReference>
<dbReference type="InterPro" id="IPR000836">
    <property type="entry name" value="PRibTrfase_dom"/>
</dbReference>
<dbReference type="InterPro" id="IPR029057">
    <property type="entry name" value="PRTase-like"/>
</dbReference>
<dbReference type="InterPro" id="IPR005946">
    <property type="entry name" value="Rib-P_diPkinase"/>
</dbReference>
<dbReference type="InterPro" id="IPR037515">
    <property type="entry name" value="Rib-P_diPkinase_bac"/>
</dbReference>
<dbReference type="NCBIfam" id="NF002320">
    <property type="entry name" value="PRK01259.1"/>
    <property type="match status" value="1"/>
</dbReference>
<dbReference type="NCBIfam" id="NF002618">
    <property type="entry name" value="PRK02269.1"/>
    <property type="match status" value="1"/>
</dbReference>
<dbReference type="NCBIfam" id="TIGR01251">
    <property type="entry name" value="ribP_PPkin"/>
    <property type="match status" value="1"/>
</dbReference>
<dbReference type="PANTHER" id="PTHR10210">
    <property type="entry name" value="RIBOSE-PHOSPHATE DIPHOSPHOKINASE FAMILY MEMBER"/>
    <property type="match status" value="1"/>
</dbReference>
<dbReference type="PANTHER" id="PTHR10210:SF41">
    <property type="entry name" value="RIBOSE-PHOSPHATE PYROPHOSPHOKINASE 1, CHLOROPLASTIC"/>
    <property type="match status" value="1"/>
</dbReference>
<dbReference type="Pfam" id="PF14572">
    <property type="entry name" value="Pribosyl_synth"/>
    <property type="match status" value="1"/>
</dbReference>
<dbReference type="Pfam" id="PF13793">
    <property type="entry name" value="Pribosyltran_N"/>
    <property type="match status" value="1"/>
</dbReference>
<dbReference type="SMART" id="SM01400">
    <property type="entry name" value="Pribosyltran_N"/>
    <property type="match status" value="1"/>
</dbReference>
<dbReference type="SUPFAM" id="SSF53271">
    <property type="entry name" value="PRTase-like"/>
    <property type="match status" value="1"/>
</dbReference>
<dbReference type="PROSITE" id="PS00114">
    <property type="entry name" value="PRPP_SYNTHASE"/>
    <property type="match status" value="1"/>
</dbReference>
<comment type="function">
    <text evidence="1">Involved in the biosynthesis of the central metabolite phospho-alpha-D-ribosyl-1-pyrophosphate (PRPP) via the transfer of pyrophosphoryl group from ATP to 1-hydroxyl of ribose-5-phosphate (Rib-5-P).</text>
</comment>
<comment type="catalytic activity">
    <reaction evidence="1">
        <text>D-ribose 5-phosphate + ATP = 5-phospho-alpha-D-ribose 1-diphosphate + AMP + H(+)</text>
        <dbReference type="Rhea" id="RHEA:15609"/>
        <dbReference type="ChEBI" id="CHEBI:15378"/>
        <dbReference type="ChEBI" id="CHEBI:30616"/>
        <dbReference type="ChEBI" id="CHEBI:58017"/>
        <dbReference type="ChEBI" id="CHEBI:78346"/>
        <dbReference type="ChEBI" id="CHEBI:456215"/>
        <dbReference type="EC" id="2.7.6.1"/>
    </reaction>
</comment>
<comment type="cofactor">
    <cofactor evidence="1">
        <name>Mg(2+)</name>
        <dbReference type="ChEBI" id="CHEBI:18420"/>
    </cofactor>
    <text evidence="1">Binds 2 Mg(2+) ions per subunit.</text>
</comment>
<comment type="pathway">
    <text evidence="1">Metabolic intermediate biosynthesis; 5-phospho-alpha-D-ribose 1-diphosphate biosynthesis; 5-phospho-alpha-D-ribose 1-diphosphate from D-ribose 5-phosphate (route I): step 1/1.</text>
</comment>
<comment type="subunit">
    <text evidence="1">Homohexamer.</text>
</comment>
<comment type="subcellular location">
    <subcellularLocation>
        <location evidence="1">Cytoplasm</location>
    </subcellularLocation>
</comment>
<comment type="similarity">
    <text evidence="1">Belongs to the ribose-phosphate pyrophosphokinase family. Class I subfamily.</text>
</comment>
<proteinExistence type="inferred from homology"/>
<protein>
    <recommendedName>
        <fullName evidence="1">Ribose-phosphate pyrophosphokinase</fullName>
        <shortName evidence="1">RPPK</shortName>
        <ecNumber evidence="1">2.7.6.1</ecNumber>
    </recommendedName>
    <alternativeName>
        <fullName evidence="1">5-phospho-D-ribosyl alpha-1-diphosphate synthase</fullName>
    </alternativeName>
    <alternativeName>
        <fullName evidence="1">Phosphoribosyl diphosphate synthase</fullName>
    </alternativeName>
    <alternativeName>
        <fullName evidence="1">Phosphoribosyl pyrophosphate synthase</fullName>
        <shortName evidence="1">P-Rib-PP synthase</shortName>
        <shortName evidence="1">PRPP synthase</shortName>
        <shortName evidence="1">PRPPase</shortName>
    </alternativeName>
</protein>
<feature type="chain" id="PRO_0000141220" description="Ribose-phosphate pyrophosphokinase">
    <location>
        <begin position="1"/>
        <end position="316"/>
    </location>
</feature>
<feature type="active site" evidence="1">
    <location>
        <position position="197"/>
    </location>
</feature>
<feature type="binding site" evidence="1">
    <location>
        <begin position="41"/>
        <end position="43"/>
    </location>
    <ligand>
        <name>ATP</name>
        <dbReference type="ChEBI" id="CHEBI:30616"/>
    </ligand>
</feature>
<feature type="binding site" evidence="1">
    <location>
        <begin position="100"/>
        <end position="101"/>
    </location>
    <ligand>
        <name>ATP</name>
        <dbReference type="ChEBI" id="CHEBI:30616"/>
    </ligand>
</feature>
<feature type="binding site" evidence="1">
    <location>
        <position position="134"/>
    </location>
    <ligand>
        <name>Mg(2+)</name>
        <dbReference type="ChEBI" id="CHEBI:18420"/>
        <label>1</label>
    </ligand>
</feature>
<feature type="binding site" evidence="1">
    <location>
        <position position="174"/>
    </location>
    <ligand>
        <name>Mg(2+)</name>
        <dbReference type="ChEBI" id="CHEBI:18420"/>
        <label>2</label>
    </ligand>
</feature>
<feature type="binding site" evidence="1">
    <location>
        <position position="199"/>
    </location>
    <ligand>
        <name>D-ribose 5-phosphate</name>
        <dbReference type="ChEBI" id="CHEBI:78346"/>
    </ligand>
</feature>
<feature type="binding site" evidence="1">
    <location>
        <position position="223"/>
    </location>
    <ligand>
        <name>D-ribose 5-phosphate</name>
        <dbReference type="ChEBI" id="CHEBI:78346"/>
    </ligand>
</feature>
<feature type="binding site" evidence="1">
    <location>
        <begin position="227"/>
        <end position="231"/>
    </location>
    <ligand>
        <name>D-ribose 5-phosphate</name>
        <dbReference type="ChEBI" id="CHEBI:78346"/>
    </ligand>
</feature>
<sequence>MARYTNSLKIFTGNSNPKLASEIAEHLGLKLADSEVGTFSDGEISVRIGESVRGASVFVIQSTCAPVNNNLMELLIMIDAFKRASAAEINAVIPYYGYARQDRKAKARDPITAKLVADLITAAGAHRVVTMDLHAPQIQGYFNIPVDHLLGGPILAKYFMDKELGDDVVVVSPDHGSVTRARYFAEKLNAPLAIIDKRRPKANVAEVMNIIGDVKGKKAILVDDLIDTAGTLVQAAEALLDHGAVEIYACATHGVLSGPAIERLKESPIKEVVITDTIPLPEEKKIDKIKVRSVAPLFAEAILRIHEGMSVSKLFT</sequence>
<reference key="1">
    <citation type="journal article" date="2002" name="Genome Res.">
        <title>A complete sequence of the T. tengcongensis genome.</title>
        <authorList>
            <person name="Bao Q."/>
            <person name="Tian Y."/>
            <person name="Li W."/>
            <person name="Xu Z."/>
            <person name="Xuan Z."/>
            <person name="Hu S."/>
            <person name="Dong W."/>
            <person name="Yang J."/>
            <person name="Chen Y."/>
            <person name="Xue Y."/>
            <person name="Xu Y."/>
            <person name="Lai X."/>
            <person name="Huang L."/>
            <person name="Dong X."/>
            <person name="Ma Y."/>
            <person name="Ling L."/>
            <person name="Tan H."/>
            <person name="Chen R."/>
            <person name="Wang J."/>
            <person name="Yu J."/>
            <person name="Yang H."/>
        </authorList>
    </citation>
    <scope>NUCLEOTIDE SEQUENCE [LARGE SCALE GENOMIC DNA]</scope>
    <source>
        <strain>DSM 15242 / JCM 11007 / NBRC 100824 / MB4</strain>
    </source>
</reference>
<organism>
    <name type="scientific">Caldanaerobacter subterraneus subsp. tengcongensis (strain DSM 15242 / JCM 11007 / NBRC 100824 / MB4)</name>
    <name type="common">Thermoanaerobacter tengcongensis</name>
    <dbReference type="NCBI Taxonomy" id="273068"/>
    <lineage>
        <taxon>Bacteria</taxon>
        <taxon>Bacillati</taxon>
        <taxon>Bacillota</taxon>
        <taxon>Clostridia</taxon>
        <taxon>Thermoanaerobacterales</taxon>
        <taxon>Thermoanaerobacteraceae</taxon>
        <taxon>Caldanaerobacter</taxon>
    </lineage>
</organism>
<evidence type="ECO:0000255" key="1">
    <source>
        <dbReference type="HAMAP-Rule" id="MF_00583"/>
    </source>
</evidence>
<keyword id="KW-0067">ATP-binding</keyword>
<keyword id="KW-0963">Cytoplasm</keyword>
<keyword id="KW-0418">Kinase</keyword>
<keyword id="KW-0460">Magnesium</keyword>
<keyword id="KW-0479">Metal-binding</keyword>
<keyword id="KW-0545">Nucleotide biosynthesis</keyword>
<keyword id="KW-0547">Nucleotide-binding</keyword>
<keyword id="KW-1185">Reference proteome</keyword>
<keyword id="KW-0808">Transferase</keyword>
<accession>Q8R753</accession>